<protein>
    <recommendedName>
        <fullName>Meiotic recombination protein DMC1 homolog</fullName>
    </recommendedName>
</protein>
<feature type="chain" id="PRO_0000122922" description="Meiotic recombination protein DMC1 homolog">
    <location>
        <begin position="1"/>
        <end position="345"/>
    </location>
</feature>
<feature type="binding site" evidence="3">
    <location>
        <begin position="134"/>
        <end position="141"/>
    </location>
    <ligand>
        <name>ATP</name>
        <dbReference type="ChEBI" id="CHEBI:30616"/>
    </ligand>
</feature>
<feature type="binding site" evidence="2">
    <location>
        <position position="236"/>
    </location>
    <ligand>
        <name>dsDNA</name>
        <dbReference type="ChEBI" id="CHEBI:4705"/>
    </ligand>
</feature>
<feature type="binding site" evidence="2">
    <location>
        <position position="236"/>
    </location>
    <ligand>
        <name>ssDNA</name>
        <dbReference type="ChEBI" id="CHEBI:9160"/>
    </ligand>
</feature>
<feature type="binding site" evidence="2">
    <location>
        <position position="239"/>
    </location>
    <ligand>
        <name>ssDNA</name>
        <dbReference type="ChEBI" id="CHEBI:9160"/>
    </ligand>
</feature>
<feature type="binding site" evidence="2">
    <location>
        <position position="242"/>
    </location>
    <ligand>
        <name>dsDNA</name>
        <dbReference type="ChEBI" id="CHEBI:4705"/>
    </ligand>
</feature>
<feature type="binding site" evidence="2">
    <location>
        <position position="242"/>
    </location>
    <ligand>
        <name>ssDNA</name>
        <dbReference type="ChEBI" id="CHEBI:9160"/>
    </ligand>
</feature>
<feature type="binding site" evidence="2">
    <location>
        <position position="248"/>
    </location>
    <ligand>
        <name>dsDNA</name>
        <dbReference type="ChEBI" id="CHEBI:4705"/>
    </ligand>
</feature>
<feature type="binding site" evidence="2">
    <location>
        <position position="248"/>
    </location>
    <ligand>
        <name>ssDNA</name>
        <dbReference type="ChEBI" id="CHEBI:9160"/>
    </ligand>
</feature>
<feature type="binding site" evidence="2">
    <location>
        <position position="316"/>
    </location>
    <ligand>
        <name>ssDNA</name>
        <dbReference type="ChEBI" id="CHEBI:9160"/>
    </ligand>
</feature>
<name>DMC1_SOYBN</name>
<accession>Q96449</accession>
<keyword id="KW-0067">ATP-binding</keyword>
<keyword id="KW-0131">Cell cycle</keyword>
<keyword id="KW-0238">DNA-binding</keyword>
<keyword id="KW-0469">Meiosis</keyword>
<keyword id="KW-0547">Nucleotide-binding</keyword>
<keyword id="KW-0539">Nucleus</keyword>
<keyword id="KW-1185">Reference proteome</keyword>
<proteinExistence type="evidence at transcript level"/>
<reference key="1">
    <citation type="submission" date="1996-08" db="EMBL/GenBank/DDBJ databases">
        <title>RecA like gene from soybean.</title>
        <authorList>
            <person name="Hadi M.Z."/>
            <person name="Finer J.J."/>
        </authorList>
    </citation>
    <scope>NUCLEOTIDE SEQUENCE [MRNA]</scope>
</reference>
<organism>
    <name type="scientific">Glycine max</name>
    <name type="common">Soybean</name>
    <name type="synonym">Glycine hispida</name>
    <dbReference type="NCBI Taxonomy" id="3847"/>
    <lineage>
        <taxon>Eukaryota</taxon>
        <taxon>Viridiplantae</taxon>
        <taxon>Streptophyta</taxon>
        <taxon>Embryophyta</taxon>
        <taxon>Tracheophyta</taxon>
        <taxon>Spermatophyta</taxon>
        <taxon>Magnoliopsida</taxon>
        <taxon>eudicotyledons</taxon>
        <taxon>Gunneridae</taxon>
        <taxon>Pentapetalae</taxon>
        <taxon>rosids</taxon>
        <taxon>fabids</taxon>
        <taxon>Fabales</taxon>
        <taxon>Fabaceae</taxon>
        <taxon>Papilionoideae</taxon>
        <taxon>50 kb inversion clade</taxon>
        <taxon>NPAAA clade</taxon>
        <taxon>indigoferoid/millettioid clade</taxon>
        <taxon>Phaseoleae</taxon>
        <taxon>Glycine</taxon>
        <taxon>Glycine subgen. Soja</taxon>
    </lineage>
</organism>
<sequence length="345" mass="37475">MLATLKSEESSGQLQLVEREDIDDDEDLFEAIDKLIAQGINAGDVKKLQDAGIYTCNGLMMHTKKNLTGIKGLSEAKVDKICEAAEKLVNFGYITGSDALLKRKSVIRITTGSQALDELLGGGVETSAITEAFGEFRSGKTQLAHTLCVSTQLPTNMRGGNGKVAYIDTEGTFRPDRIVPIAERFGMDPGAVLDNIIYARAYTYEHQYNLLLGLAAKMSEEPFRLLIVDSVIALFRVDFSGRGELADRQQKLAQMLSRLIKIAEEFNVAVYMTNQVISDPGGGVFVTDPKKPAGGHVLAHAATVRLMFRKGKGEQRICKVFDAPNLPEAEAVFQITAGGIADAKD</sequence>
<dbReference type="EMBL" id="U66836">
    <property type="protein sequence ID" value="AAB07025.1"/>
    <property type="molecule type" value="mRNA"/>
</dbReference>
<dbReference type="PIR" id="T08838">
    <property type="entry name" value="T08838"/>
</dbReference>
<dbReference type="RefSeq" id="NP_001238425.1">
    <property type="nucleotide sequence ID" value="NM_001251496.2"/>
</dbReference>
<dbReference type="SMR" id="Q96449"/>
<dbReference type="FunCoup" id="Q96449">
    <property type="interactions" value="433"/>
</dbReference>
<dbReference type="STRING" id="3847.Q96449"/>
<dbReference type="PaxDb" id="3847-GLYMA10G38830.1"/>
<dbReference type="EnsemblPlants" id="KRH35438">
    <property type="protein sequence ID" value="KRH35438"/>
    <property type="gene ID" value="GLYMA_10G243200"/>
</dbReference>
<dbReference type="GeneID" id="548075"/>
<dbReference type="Gramene" id="KRH35438">
    <property type="protein sequence ID" value="KRH35438"/>
    <property type="gene ID" value="GLYMA_10G243200"/>
</dbReference>
<dbReference type="KEGG" id="gmx:548075"/>
<dbReference type="eggNOG" id="KOG1434">
    <property type="taxonomic scope" value="Eukaryota"/>
</dbReference>
<dbReference type="InParanoid" id="Q96449"/>
<dbReference type="OMA" id="ANPMKPV"/>
<dbReference type="OrthoDB" id="10251254at2759"/>
<dbReference type="Proteomes" id="UP000008827">
    <property type="component" value="Chromosome 10"/>
</dbReference>
<dbReference type="GO" id="GO:0000794">
    <property type="term" value="C:condensed nuclear chromosome"/>
    <property type="evidence" value="ECO:0000318"/>
    <property type="project" value="GO_Central"/>
</dbReference>
<dbReference type="GO" id="GO:0005524">
    <property type="term" value="F:ATP binding"/>
    <property type="evidence" value="ECO:0007669"/>
    <property type="project" value="UniProtKB-KW"/>
</dbReference>
<dbReference type="GO" id="GO:0016887">
    <property type="term" value="F:ATP hydrolysis activity"/>
    <property type="evidence" value="ECO:0007669"/>
    <property type="project" value="InterPro"/>
</dbReference>
<dbReference type="GO" id="GO:0008094">
    <property type="term" value="F:ATP-dependent activity, acting on DNA"/>
    <property type="evidence" value="ECO:0000318"/>
    <property type="project" value="GO_Central"/>
</dbReference>
<dbReference type="GO" id="GO:0140664">
    <property type="term" value="F:ATP-dependent DNA damage sensor activity"/>
    <property type="evidence" value="ECO:0007669"/>
    <property type="project" value="InterPro"/>
</dbReference>
<dbReference type="GO" id="GO:0000150">
    <property type="term" value="F:DNA strand exchange activity"/>
    <property type="evidence" value="ECO:0000318"/>
    <property type="project" value="GO_Central"/>
</dbReference>
<dbReference type="GO" id="GO:0003690">
    <property type="term" value="F:double-stranded DNA binding"/>
    <property type="evidence" value="ECO:0000318"/>
    <property type="project" value="GO_Central"/>
</dbReference>
<dbReference type="GO" id="GO:0003697">
    <property type="term" value="F:single-stranded DNA binding"/>
    <property type="evidence" value="ECO:0000318"/>
    <property type="project" value="GO_Central"/>
</dbReference>
<dbReference type="GO" id="GO:0070192">
    <property type="term" value="P:chromosome organization involved in meiotic cell cycle"/>
    <property type="evidence" value="ECO:0000318"/>
    <property type="project" value="GO_Central"/>
</dbReference>
<dbReference type="GO" id="GO:0000730">
    <property type="term" value="P:DNA recombinase assembly"/>
    <property type="evidence" value="ECO:0000318"/>
    <property type="project" value="GO_Central"/>
</dbReference>
<dbReference type="GO" id="GO:0042148">
    <property type="term" value="P:DNA strand invasion"/>
    <property type="evidence" value="ECO:0000318"/>
    <property type="project" value="GO_Central"/>
</dbReference>
<dbReference type="GO" id="GO:0006312">
    <property type="term" value="P:mitotic recombination"/>
    <property type="evidence" value="ECO:0000318"/>
    <property type="project" value="GO_Central"/>
</dbReference>
<dbReference type="GO" id="GO:0007131">
    <property type="term" value="P:reciprocal meiotic recombination"/>
    <property type="evidence" value="ECO:0000318"/>
    <property type="project" value="GO_Central"/>
</dbReference>
<dbReference type="CDD" id="cd19514">
    <property type="entry name" value="DMC1"/>
    <property type="match status" value="1"/>
</dbReference>
<dbReference type="FunFam" id="3.40.50.300:FF:000239">
    <property type="entry name" value="Meiotic recombination protein DMC1"/>
    <property type="match status" value="1"/>
</dbReference>
<dbReference type="FunFam" id="1.10.150.20:FF:000043">
    <property type="entry name" value="Meiotic recombination protein DMC1 homolog"/>
    <property type="match status" value="1"/>
</dbReference>
<dbReference type="Gene3D" id="1.10.150.20">
    <property type="entry name" value="5' to 3' exonuclease, C-terminal subdomain"/>
    <property type="match status" value="1"/>
</dbReference>
<dbReference type="Gene3D" id="3.40.50.300">
    <property type="entry name" value="P-loop containing nucleotide triphosphate hydrolases"/>
    <property type="match status" value="1"/>
</dbReference>
<dbReference type="InterPro" id="IPR003593">
    <property type="entry name" value="AAA+_ATPase"/>
</dbReference>
<dbReference type="InterPro" id="IPR011940">
    <property type="entry name" value="Dmc1"/>
</dbReference>
<dbReference type="InterPro" id="IPR013632">
    <property type="entry name" value="DNA_recomb/repair_Rad51_C"/>
</dbReference>
<dbReference type="InterPro" id="IPR016467">
    <property type="entry name" value="DNA_recomb/repair_RecA-like"/>
</dbReference>
<dbReference type="InterPro" id="IPR010995">
    <property type="entry name" value="DNA_repair_Rad51/TF_NusA_a-hlx"/>
</dbReference>
<dbReference type="InterPro" id="IPR027417">
    <property type="entry name" value="P-loop_NTPase"/>
</dbReference>
<dbReference type="InterPro" id="IPR020588">
    <property type="entry name" value="RecA_ATP-bd"/>
</dbReference>
<dbReference type="InterPro" id="IPR020587">
    <property type="entry name" value="RecA_monomer-monomer_interface"/>
</dbReference>
<dbReference type="NCBIfam" id="NF003301">
    <property type="entry name" value="PRK04301.1"/>
    <property type="match status" value="1"/>
</dbReference>
<dbReference type="NCBIfam" id="TIGR02238">
    <property type="entry name" value="recomb_DMC1"/>
    <property type="match status" value="1"/>
</dbReference>
<dbReference type="PANTHER" id="PTHR22942:SF30">
    <property type="entry name" value="MEIOTIC RECOMBINATION PROTEIN DMC1_LIM15 HOMOLOG"/>
    <property type="match status" value="1"/>
</dbReference>
<dbReference type="PANTHER" id="PTHR22942">
    <property type="entry name" value="RECA/RAD51/RADA DNA STRAND-PAIRING FAMILY MEMBER"/>
    <property type="match status" value="1"/>
</dbReference>
<dbReference type="Pfam" id="PF08423">
    <property type="entry name" value="Rad51"/>
    <property type="match status" value="1"/>
</dbReference>
<dbReference type="PIRSF" id="PIRSF005856">
    <property type="entry name" value="Rad51"/>
    <property type="match status" value="1"/>
</dbReference>
<dbReference type="SMART" id="SM00382">
    <property type="entry name" value="AAA"/>
    <property type="match status" value="1"/>
</dbReference>
<dbReference type="SUPFAM" id="SSF52540">
    <property type="entry name" value="P-loop containing nucleoside triphosphate hydrolases"/>
    <property type="match status" value="1"/>
</dbReference>
<dbReference type="SUPFAM" id="SSF47794">
    <property type="entry name" value="Rad51 N-terminal domain-like"/>
    <property type="match status" value="1"/>
</dbReference>
<dbReference type="PROSITE" id="PS50162">
    <property type="entry name" value="RECA_2"/>
    <property type="match status" value="1"/>
</dbReference>
<dbReference type="PROSITE" id="PS50163">
    <property type="entry name" value="RECA_3"/>
    <property type="match status" value="1"/>
</dbReference>
<evidence type="ECO:0000250" key="1"/>
<evidence type="ECO:0000250" key="2">
    <source>
        <dbReference type="UniProtKB" id="Q14565"/>
    </source>
</evidence>
<evidence type="ECO:0000255" key="3"/>
<evidence type="ECO:0000305" key="4"/>
<comment type="function">
    <text>May participate in meiotic recombination.</text>
</comment>
<comment type="subunit">
    <text evidence="1">Double stacked ring-shaped homooctamer.</text>
</comment>
<comment type="subcellular location">
    <subcellularLocation>
        <location evidence="4">Nucleus</location>
    </subcellularLocation>
</comment>
<comment type="similarity">
    <text evidence="4">Belongs to the RecA family. DMC1 subfamily.</text>
</comment>